<evidence type="ECO:0000255" key="1">
    <source>
        <dbReference type="HAMAP-Rule" id="MF_00340"/>
    </source>
</evidence>
<evidence type="ECO:0000256" key="2">
    <source>
        <dbReference type="SAM" id="MobiDB-lite"/>
    </source>
</evidence>
<evidence type="ECO:0000305" key="3"/>
<dbReference type="EMBL" id="CP001172">
    <property type="protein sequence ID" value="ACJ58708.1"/>
    <property type="molecule type" value="Genomic_DNA"/>
</dbReference>
<dbReference type="RefSeq" id="WP_000290730.1">
    <property type="nucleotide sequence ID" value="NZ_CP001172.1"/>
</dbReference>
<dbReference type="SMR" id="B7GYS1"/>
<dbReference type="GeneID" id="9383546"/>
<dbReference type="HOGENOM" id="CLU_129084_2_1_6"/>
<dbReference type="Proteomes" id="UP000006924">
    <property type="component" value="Chromosome"/>
</dbReference>
<dbReference type="GO" id="GO:0015934">
    <property type="term" value="C:large ribosomal subunit"/>
    <property type="evidence" value="ECO:0007669"/>
    <property type="project" value="InterPro"/>
</dbReference>
<dbReference type="GO" id="GO:0003735">
    <property type="term" value="F:structural constituent of ribosome"/>
    <property type="evidence" value="ECO:0007669"/>
    <property type="project" value="InterPro"/>
</dbReference>
<dbReference type="GO" id="GO:0006412">
    <property type="term" value="P:translation"/>
    <property type="evidence" value="ECO:0007669"/>
    <property type="project" value="UniProtKB-UniRule"/>
</dbReference>
<dbReference type="HAMAP" id="MF_00340">
    <property type="entry name" value="Ribosomal_bL32"/>
    <property type="match status" value="1"/>
</dbReference>
<dbReference type="InterPro" id="IPR002677">
    <property type="entry name" value="Ribosomal_bL32"/>
</dbReference>
<dbReference type="InterPro" id="IPR044957">
    <property type="entry name" value="Ribosomal_bL32_bact"/>
</dbReference>
<dbReference type="InterPro" id="IPR011332">
    <property type="entry name" value="Ribosomal_zn-bd"/>
</dbReference>
<dbReference type="NCBIfam" id="TIGR01031">
    <property type="entry name" value="rpmF_bact"/>
    <property type="match status" value="1"/>
</dbReference>
<dbReference type="PANTHER" id="PTHR35534">
    <property type="entry name" value="50S RIBOSOMAL PROTEIN L32"/>
    <property type="match status" value="1"/>
</dbReference>
<dbReference type="PANTHER" id="PTHR35534:SF1">
    <property type="entry name" value="LARGE RIBOSOMAL SUBUNIT PROTEIN BL32"/>
    <property type="match status" value="1"/>
</dbReference>
<dbReference type="Pfam" id="PF01783">
    <property type="entry name" value="Ribosomal_L32p"/>
    <property type="match status" value="1"/>
</dbReference>
<dbReference type="SUPFAM" id="SSF57829">
    <property type="entry name" value="Zn-binding ribosomal proteins"/>
    <property type="match status" value="1"/>
</dbReference>
<protein>
    <recommendedName>
        <fullName evidence="1">Large ribosomal subunit protein bL32</fullName>
    </recommendedName>
    <alternativeName>
        <fullName evidence="3">50S ribosomal protein L32</fullName>
    </alternativeName>
</protein>
<comment type="similarity">
    <text evidence="1">Belongs to the bacterial ribosomal protein bL32 family.</text>
</comment>
<proteinExistence type="inferred from homology"/>
<keyword id="KW-0687">Ribonucleoprotein</keyword>
<keyword id="KW-0689">Ribosomal protein</keyword>
<accession>B7GYS1</accession>
<sequence>MAVQQNRKSRSRRDMRRSHDALTENALTVDQATGETHRRHHVTKDGFYRGRQLFAKAADAE</sequence>
<organism>
    <name type="scientific">Acinetobacter baumannii (strain AB307-0294)</name>
    <dbReference type="NCBI Taxonomy" id="557600"/>
    <lineage>
        <taxon>Bacteria</taxon>
        <taxon>Pseudomonadati</taxon>
        <taxon>Pseudomonadota</taxon>
        <taxon>Gammaproteobacteria</taxon>
        <taxon>Moraxellales</taxon>
        <taxon>Moraxellaceae</taxon>
        <taxon>Acinetobacter</taxon>
        <taxon>Acinetobacter calcoaceticus/baumannii complex</taxon>
    </lineage>
</organism>
<gene>
    <name evidence="1" type="primary">rpmF</name>
    <name type="ordered locus">ABBFA_002796</name>
</gene>
<feature type="chain" id="PRO_1000120071" description="Large ribosomal subunit protein bL32">
    <location>
        <begin position="1"/>
        <end position="61"/>
    </location>
</feature>
<feature type="region of interest" description="Disordered" evidence="2">
    <location>
        <begin position="1"/>
        <end position="44"/>
    </location>
</feature>
<feature type="compositionally biased region" description="Basic residues" evidence="2">
    <location>
        <begin position="7"/>
        <end position="16"/>
    </location>
</feature>
<feature type="compositionally biased region" description="Polar residues" evidence="2">
    <location>
        <begin position="25"/>
        <end position="34"/>
    </location>
</feature>
<reference key="1">
    <citation type="journal article" date="2008" name="J. Bacteriol.">
        <title>Comparative genome sequence analysis of multidrug-resistant Acinetobacter baumannii.</title>
        <authorList>
            <person name="Adams M.D."/>
            <person name="Goglin K."/>
            <person name="Molyneaux N."/>
            <person name="Hujer K.M."/>
            <person name="Lavender H."/>
            <person name="Jamison J.J."/>
            <person name="MacDonald I.J."/>
            <person name="Martin K.M."/>
            <person name="Russo T."/>
            <person name="Campagnari A.A."/>
            <person name="Hujer A.M."/>
            <person name="Bonomo R.A."/>
            <person name="Gill S.R."/>
        </authorList>
    </citation>
    <scope>NUCLEOTIDE SEQUENCE [LARGE SCALE GENOMIC DNA]</scope>
    <source>
        <strain>AB307-0294</strain>
    </source>
</reference>
<name>RL32_ACIB3</name>